<dbReference type="EMBL" id="AP006728">
    <property type="protein sequence ID" value="BAD26801.1"/>
    <property type="molecule type" value="Genomic_DNA"/>
</dbReference>
<dbReference type="RefSeq" id="YP_052772.1">
    <property type="nucleotide sequence ID" value="NC_005973.1"/>
</dbReference>
<dbReference type="SMR" id="Q6ENF1"/>
<dbReference type="STRING" id="4536.Q6ENF1"/>
<dbReference type="GeneID" id="2885926"/>
<dbReference type="Proteomes" id="UP000006591">
    <property type="component" value="Chloroplast"/>
</dbReference>
<dbReference type="GO" id="GO:0009507">
    <property type="term" value="C:chloroplast"/>
    <property type="evidence" value="ECO:0007669"/>
    <property type="project" value="UniProtKB-SubCell"/>
</dbReference>
<dbReference type="GO" id="GO:0005763">
    <property type="term" value="C:mitochondrial small ribosomal subunit"/>
    <property type="evidence" value="ECO:0007669"/>
    <property type="project" value="TreeGrafter"/>
</dbReference>
<dbReference type="GO" id="GO:0009536">
    <property type="term" value="C:plastid"/>
    <property type="evidence" value="ECO:0000305"/>
    <property type="project" value="Gramene"/>
</dbReference>
<dbReference type="GO" id="GO:0070181">
    <property type="term" value="F:small ribosomal subunit rRNA binding"/>
    <property type="evidence" value="ECO:0007669"/>
    <property type="project" value="TreeGrafter"/>
</dbReference>
<dbReference type="GO" id="GO:0003735">
    <property type="term" value="F:structural constituent of ribosome"/>
    <property type="evidence" value="ECO:0007669"/>
    <property type="project" value="InterPro"/>
</dbReference>
<dbReference type="GO" id="GO:0006412">
    <property type="term" value="P:translation"/>
    <property type="evidence" value="ECO:0007669"/>
    <property type="project" value="UniProtKB-UniRule"/>
</dbReference>
<dbReference type="FunFam" id="4.10.640.10:FF:000002">
    <property type="entry name" value="30S ribosomal protein S18, chloroplastic"/>
    <property type="match status" value="1"/>
</dbReference>
<dbReference type="Gene3D" id="4.10.640.10">
    <property type="entry name" value="Ribosomal protein S18"/>
    <property type="match status" value="1"/>
</dbReference>
<dbReference type="HAMAP" id="MF_00270">
    <property type="entry name" value="Ribosomal_bS18"/>
    <property type="match status" value="1"/>
</dbReference>
<dbReference type="InterPro" id="IPR001648">
    <property type="entry name" value="Ribosomal_bS18"/>
</dbReference>
<dbReference type="InterPro" id="IPR018275">
    <property type="entry name" value="Ribosomal_bS18_CS"/>
</dbReference>
<dbReference type="InterPro" id="IPR036870">
    <property type="entry name" value="Ribosomal_bS18_sf"/>
</dbReference>
<dbReference type="NCBIfam" id="TIGR00165">
    <property type="entry name" value="S18"/>
    <property type="match status" value="1"/>
</dbReference>
<dbReference type="PANTHER" id="PTHR13479">
    <property type="entry name" value="30S RIBOSOMAL PROTEIN S18"/>
    <property type="match status" value="1"/>
</dbReference>
<dbReference type="PANTHER" id="PTHR13479:SF40">
    <property type="entry name" value="SMALL RIBOSOMAL SUBUNIT PROTEIN BS18M"/>
    <property type="match status" value="1"/>
</dbReference>
<dbReference type="Pfam" id="PF01084">
    <property type="entry name" value="Ribosomal_S18"/>
    <property type="match status" value="1"/>
</dbReference>
<dbReference type="PRINTS" id="PR00974">
    <property type="entry name" value="RIBOSOMALS18"/>
</dbReference>
<dbReference type="SUPFAM" id="SSF46911">
    <property type="entry name" value="Ribosomal protein S18"/>
    <property type="match status" value="1"/>
</dbReference>
<dbReference type="PROSITE" id="PS00057">
    <property type="entry name" value="RIBOSOMAL_S18"/>
    <property type="match status" value="1"/>
</dbReference>
<proteinExistence type="inferred from homology"/>
<comment type="subunit">
    <text>Part of the 30S ribosomal subunit.</text>
</comment>
<comment type="subcellular location">
    <subcellularLocation>
        <location>Plastid</location>
        <location>Chloroplast</location>
    </subcellularLocation>
</comment>
<comment type="similarity">
    <text evidence="1">Belongs to the bacterial ribosomal protein bS18 family.</text>
</comment>
<accession>Q6ENF1</accession>
<organism>
    <name type="scientific">Oryza nivara</name>
    <name type="common">Indian wild rice</name>
    <name type="synonym">Oryza sativa f. spontanea</name>
    <dbReference type="NCBI Taxonomy" id="4536"/>
    <lineage>
        <taxon>Eukaryota</taxon>
        <taxon>Viridiplantae</taxon>
        <taxon>Streptophyta</taxon>
        <taxon>Embryophyta</taxon>
        <taxon>Tracheophyta</taxon>
        <taxon>Spermatophyta</taxon>
        <taxon>Magnoliopsida</taxon>
        <taxon>Liliopsida</taxon>
        <taxon>Poales</taxon>
        <taxon>Poaceae</taxon>
        <taxon>BOP clade</taxon>
        <taxon>Oryzoideae</taxon>
        <taxon>Oryzeae</taxon>
        <taxon>Oryzinae</taxon>
        <taxon>Oryza</taxon>
    </lineage>
</organism>
<sequence length="163" mass="19656">MYTSKQPFHKSKQTFHKSKQTFRKSKQTFRKFKQPFRKPKQPFRRRPRIGPGDRIDYRNMSLINRFISEQGKILSRRINRLTLKQQRLITLAIKQARILSFLPFRNYENEKQFQAQSISIITGPRPRKNRHIPPLTQKFNSNRNLRNSNQTLRNNNRNLSSDC</sequence>
<gene>
    <name evidence="1" type="primary">rps18</name>
</gene>
<geneLocation type="chloroplast"/>
<protein>
    <recommendedName>
        <fullName evidence="1">Small ribosomal subunit protein bS18c</fullName>
    </recommendedName>
    <alternativeName>
        <fullName evidence="3">30S ribosomal protein S18, chloroplastic</fullName>
    </alternativeName>
</protein>
<name>RR18_ORYNI</name>
<reference key="1">
    <citation type="journal article" date="2004" name="Gene">
        <title>The complete nucleotide sequence of wild rice (Oryza nivara) chloroplast genome: first genome wide comparative sequence analysis of wild and cultivated rice.</title>
        <authorList>
            <person name="Masood M.S."/>
            <person name="Nishikawa T."/>
            <person name="Fukuoka S."/>
            <person name="Njenga P.K."/>
            <person name="Tsudzuki T."/>
            <person name="Kadowaki K."/>
        </authorList>
    </citation>
    <scope>NUCLEOTIDE SEQUENCE [LARGE SCALE GENOMIC DNA]</scope>
    <source>
        <strain evidence="4">cv. SL10</strain>
    </source>
</reference>
<keyword id="KW-0150">Chloroplast</keyword>
<keyword id="KW-0934">Plastid</keyword>
<keyword id="KW-1185">Reference proteome</keyword>
<keyword id="KW-0687">Ribonucleoprotein</keyword>
<keyword id="KW-0689">Ribosomal protein</keyword>
<keyword id="KW-0694">RNA-binding</keyword>
<keyword id="KW-0699">rRNA-binding</keyword>
<evidence type="ECO:0000255" key="1">
    <source>
        <dbReference type="HAMAP-Rule" id="MF_00270"/>
    </source>
</evidence>
<evidence type="ECO:0000256" key="2">
    <source>
        <dbReference type="SAM" id="MobiDB-lite"/>
    </source>
</evidence>
<evidence type="ECO:0000305" key="3"/>
<evidence type="ECO:0000312" key="4">
    <source>
        <dbReference type="Proteomes" id="UP000006591"/>
    </source>
</evidence>
<feature type="chain" id="PRO_0000111299" description="Small ribosomal subunit protein bS18c">
    <location>
        <begin position="1"/>
        <end position="163"/>
    </location>
</feature>
<feature type="region of interest" description="Disordered" evidence="2">
    <location>
        <begin position="1"/>
        <end position="54"/>
    </location>
</feature>
<feature type="region of interest" description="Disordered" evidence="2">
    <location>
        <begin position="121"/>
        <end position="163"/>
    </location>
</feature>
<feature type="compositionally biased region" description="Basic residues" evidence="2">
    <location>
        <begin position="7"/>
        <end position="48"/>
    </location>
</feature>
<feature type="compositionally biased region" description="Low complexity" evidence="2">
    <location>
        <begin position="140"/>
        <end position="163"/>
    </location>
</feature>